<name>SECM_ECOBW</name>
<evidence type="ECO:0000255" key="1">
    <source>
        <dbReference type="HAMAP-Rule" id="MF_01332"/>
    </source>
</evidence>
<protein>
    <recommendedName>
        <fullName evidence="1">Secretion monitor</fullName>
    </recommendedName>
</protein>
<comment type="function">
    <text evidence="1">Regulates secA expression by translational coupling of the secM secA operon. Translational pausing at a specific Pro residue 5 residues before the end of the protein may allow disruption of a mRNA repressor helix that normally suppresses secA translation initiation.</text>
</comment>
<comment type="subcellular location">
    <subcellularLocation>
        <location evidence="1">Cytoplasm</location>
        <location evidence="1">Cytosol</location>
    </subcellularLocation>
    <subcellularLocation>
        <location evidence="1">Periplasm</location>
    </subcellularLocation>
    <text evidence="1">The active form is cytosolic, while the periplasmic form is rapidly degraded, mainly by the tail-specific protease.</text>
</comment>
<comment type="similarity">
    <text evidence="1">Belongs to the SecM family.</text>
</comment>
<accession>C4ZRJ2</accession>
<gene>
    <name evidence="1" type="primary">secM</name>
    <name type="ordered locus">BWG_0092</name>
</gene>
<dbReference type="EMBL" id="CP001396">
    <property type="protein sequence ID" value="ACR65432.1"/>
    <property type="molecule type" value="Genomic_DNA"/>
</dbReference>
<dbReference type="RefSeq" id="WP_000014321.1">
    <property type="nucleotide sequence ID" value="NC_012759.1"/>
</dbReference>
<dbReference type="SMR" id="C4ZRJ2"/>
<dbReference type="GeneID" id="93777337"/>
<dbReference type="KEGG" id="ebw:BWG_0092"/>
<dbReference type="HOGENOM" id="CLU_108853_0_0_6"/>
<dbReference type="GO" id="GO:0005829">
    <property type="term" value="C:cytosol"/>
    <property type="evidence" value="ECO:0007669"/>
    <property type="project" value="UniProtKB-SubCell"/>
</dbReference>
<dbReference type="GO" id="GO:0042597">
    <property type="term" value="C:periplasmic space"/>
    <property type="evidence" value="ECO:0007669"/>
    <property type="project" value="UniProtKB-SubCell"/>
</dbReference>
<dbReference type="GO" id="GO:0045182">
    <property type="term" value="F:translation regulator activity"/>
    <property type="evidence" value="ECO:0007669"/>
    <property type="project" value="InterPro"/>
</dbReference>
<dbReference type="HAMAP" id="MF_01332">
    <property type="entry name" value="SecM"/>
    <property type="match status" value="1"/>
</dbReference>
<dbReference type="InterPro" id="IPR009502">
    <property type="entry name" value="SecM"/>
</dbReference>
<dbReference type="NCBIfam" id="NF002799">
    <property type="entry name" value="PRK02943.1-1"/>
    <property type="match status" value="1"/>
</dbReference>
<dbReference type="Pfam" id="PF06558">
    <property type="entry name" value="SecM"/>
    <property type="match status" value="1"/>
</dbReference>
<dbReference type="PIRSF" id="PIRSF004572">
    <property type="entry name" value="SecM"/>
    <property type="match status" value="1"/>
</dbReference>
<organism>
    <name type="scientific">Escherichia coli (strain K12 / MC4100 / BW2952)</name>
    <dbReference type="NCBI Taxonomy" id="595496"/>
    <lineage>
        <taxon>Bacteria</taxon>
        <taxon>Pseudomonadati</taxon>
        <taxon>Pseudomonadota</taxon>
        <taxon>Gammaproteobacteria</taxon>
        <taxon>Enterobacterales</taxon>
        <taxon>Enterobacteriaceae</taxon>
        <taxon>Escherichia</taxon>
    </lineage>
</organism>
<keyword id="KW-0963">Cytoplasm</keyword>
<keyword id="KW-0574">Periplasm</keyword>
<keyword id="KW-0732">Signal</keyword>
<reference key="1">
    <citation type="journal article" date="2009" name="J. Bacteriol.">
        <title>Genomic sequencing reveals regulatory mutations and recombinational events in the widely used MC4100 lineage of Escherichia coli K-12.</title>
        <authorList>
            <person name="Ferenci T."/>
            <person name="Zhou Z."/>
            <person name="Betteridge T."/>
            <person name="Ren Y."/>
            <person name="Liu Y."/>
            <person name="Feng L."/>
            <person name="Reeves P.R."/>
            <person name="Wang L."/>
        </authorList>
    </citation>
    <scope>NUCLEOTIDE SEQUENCE [LARGE SCALE GENOMIC DNA]</scope>
    <source>
        <strain>K12 / MC4100 / BW2952</strain>
    </source>
</reference>
<feature type="signal peptide" evidence="1">
    <location>
        <begin position="1"/>
        <end position="37"/>
    </location>
</feature>
<feature type="chain" id="PRO_1000214619" description="Secretion monitor">
    <location>
        <begin position="38"/>
        <end position="170"/>
    </location>
</feature>
<proteinExistence type="inferred from homology"/>
<sequence length="170" mass="18880">MSGILTRWRQFGKRYFWPHLLLGMVAASLGLPALSNAAEPNAPAKATTRNHEPSAKVNFGQLALLEANTRRPNSNYSVDYWHQHAIRTVIRHLSFAMAPQTLPVAEESLPLQAQHLALLDTLSALLTQEGTPSEKGYRIDYAHFTPQAKFSTPVWISQAQGIRAGPQRLT</sequence>